<feature type="chain" id="PRO_0000150178" description="Phosphoserine aminotransferase">
    <location>
        <begin position="1"/>
        <end position="362"/>
    </location>
</feature>
<feature type="binding site" evidence="1">
    <location>
        <position position="43"/>
    </location>
    <ligand>
        <name>L-glutamate</name>
        <dbReference type="ChEBI" id="CHEBI:29985"/>
    </ligand>
</feature>
<feature type="binding site" evidence="1">
    <location>
        <begin position="77"/>
        <end position="78"/>
    </location>
    <ligand>
        <name>pyridoxal 5'-phosphate</name>
        <dbReference type="ChEBI" id="CHEBI:597326"/>
    </ligand>
</feature>
<feature type="binding site" evidence="1">
    <location>
        <position position="103"/>
    </location>
    <ligand>
        <name>pyridoxal 5'-phosphate</name>
        <dbReference type="ChEBI" id="CHEBI:597326"/>
    </ligand>
</feature>
<feature type="binding site" evidence="1">
    <location>
        <position position="153"/>
    </location>
    <ligand>
        <name>pyridoxal 5'-phosphate</name>
        <dbReference type="ChEBI" id="CHEBI:597326"/>
    </ligand>
</feature>
<feature type="binding site" evidence="1">
    <location>
        <position position="173"/>
    </location>
    <ligand>
        <name>pyridoxal 5'-phosphate</name>
        <dbReference type="ChEBI" id="CHEBI:597326"/>
    </ligand>
</feature>
<feature type="binding site" evidence="1">
    <location>
        <position position="196"/>
    </location>
    <ligand>
        <name>pyridoxal 5'-phosphate</name>
        <dbReference type="ChEBI" id="CHEBI:597326"/>
    </ligand>
</feature>
<feature type="modified residue" description="N6-(pyridoxal phosphate)lysine" evidence="1">
    <location>
        <position position="197"/>
    </location>
</feature>
<comment type="function">
    <text evidence="1">Catalyzes the reversible conversion of 3-phosphohydroxypyruvate to phosphoserine and of 3-hydroxy-2-oxo-4-phosphonooxybutanoate to phosphohydroxythreonine.</text>
</comment>
<comment type="catalytic activity">
    <reaction evidence="1">
        <text>O-phospho-L-serine + 2-oxoglutarate = 3-phosphooxypyruvate + L-glutamate</text>
        <dbReference type="Rhea" id="RHEA:14329"/>
        <dbReference type="ChEBI" id="CHEBI:16810"/>
        <dbReference type="ChEBI" id="CHEBI:18110"/>
        <dbReference type="ChEBI" id="CHEBI:29985"/>
        <dbReference type="ChEBI" id="CHEBI:57524"/>
        <dbReference type="EC" id="2.6.1.52"/>
    </reaction>
</comment>
<comment type="catalytic activity">
    <reaction evidence="1">
        <text>4-(phosphooxy)-L-threonine + 2-oxoglutarate = (R)-3-hydroxy-2-oxo-4-phosphooxybutanoate + L-glutamate</text>
        <dbReference type="Rhea" id="RHEA:16573"/>
        <dbReference type="ChEBI" id="CHEBI:16810"/>
        <dbReference type="ChEBI" id="CHEBI:29985"/>
        <dbReference type="ChEBI" id="CHEBI:58452"/>
        <dbReference type="ChEBI" id="CHEBI:58538"/>
        <dbReference type="EC" id="2.6.1.52"/>
    </reaction>
</comment>
<comment type="cofactor">
    <cofactor evidence="1">
        <name>pyridoxal 5'-phosphate</name>
        <dbReference type="ChEBI" id="CHEBI:597326"/>
    </cofactor>
    <text evidence="1">Binds 1 pyridoxal phosphate per subunit.</text>
</comment>
<comment type="pathway">
    <text evidence="1">Amino-acid biosynthesis; L-serine biosynthesis; L-serine from 3-phospho-D-glycerate: step 2/3.</text>
</comment>
<comment type="pathway">
    <text evidence="1">Cofactor biosynthesis; pyridoxine 5'-phosphate biosynthesis; pyridoxine 5'-phosphate from D-erythrose 4-phosphate: step 3/5.</text>
</comment>
<comment type="subunit">
    <text evidence="1">Homodimer.</text>
</comment>
<comment type="subcellular location">
    <subcellularLocation>
        <location evidence="1">Cytoplasm</location>
    </subcellularLocation>
</comment>
<comment type="similarity">
    <text evidence="1">Belongs to the class-V pyridoxal-phosphate-dependent aminotransferase family. SerC subfamily.</text>
</comment>
<gene>
    <name evidence="1" type="primary">serC</name>
    <name type="ordered locus">lpp1373</name>
</gene>
<proteinExistence type="inferred from homology"/>
<reference key="1">
    <citation type="journal article" date="2004" name="Nat. Genet.">
        <title>Evidence in the Legionella pneumophila genome for exploitation of host cell functions and high genome plasticity.</title>
        <authorList>
            <person name="Cazalet C."/>
            <person name="Rusniok C."/>
            <person name="Brueggemann H."/>
            <person name="Zidane N."/>
            <person name="Magnier A."/>
            <person name="Ma L."/>
            <person name="Tichit M."/>
            <person name="Jarraud S."/>
            <person name="Bouchier C."/>
            <person name="Vandenesch F."/>
            <person name="Kunst F."/>
            <person name="Etienne J."/>
            <person name="Glaser P."/>
            <person name="Buchrieser C."/>
        </authorList>
    </citation>
    <scope>NUCLEOTIDE SEQUENCE [LARGE SCALE GENOMIC DNA]</scope>
    <source>
        <strain>Paris</strain>
    </source>
</reference>
<sequence>MNSRVFNFGAGPAMLPEEILKEAQEEFLNWRNTGMSILEIGHRTPEIINLLSTAEQSLRELLNIPKNYHVLFLGGAARAQFAMIPMNLLQPGDEAAYFITGIWSKMAYHEANLLKQAYYLSNEEKEGFVSIPDYQKWELKSNTPYVYYTPNETINGVRFPYVPKTGGVPLVADMTSCLLSEPININQYGLIFAGAQKNIANAGLTIVIIHEDLLKNQPEPAIPTMLNYKNHAEHRSLYATPPVFNCYLASKMFEWIKTQGGIEGVFQRNCLKAAKLYQYLDSTDFYLTPVSKEARSIMNICFSLCYPDLEQKFLDMANKRGLKALKGHRFTGGLRASLYNAMPMAGVDALIEFMSEFAKENG</sequence>
<accession>Q5X5E7</accession>
<protein>
    <recommendedName>
        <fullName evidence="1">Phosphoserine aminotransferase</fullName>
        <ecNumber evidence="1">2.6.1.52</ecNumber>
    </recommendedName>
    <alternativeName>
        <fullName evidence="1">Phosphohydroxythreonine aminotransferase</fullName>
        <shortName evidence="1">PSAT</shortName>
    </alternativeName>
</protein>
<keyword id="KW-0028">Amino-acid biosynthesis</keyword>
<keyword id="KW-0032">Aminotransferase</keyword>
<keyword id="KW-0963">Cytoplasm</keyword>
<keyword id="KW-0663">Pyridoxal phosphate</keyword>
<keyword id="KW-0664">Pyridoxine biosynthesis</keyword>
<keyword id="KW-0718">Serine biosynthesis</keyword>
<keyword id="KW-0808">Transferase</keyword>
<name>SERC_LEGPA</name>
<evidence type="ECO:0000255" key="1">
    <source>
        <dbReference type="HAMAP-Rule" id="MF_00160"/>
    </source>
</evidence>
<organism>
    <name type="scientific">Legionella pneumophila (strain Paris)</name>
    <dbReference type="NCBI Taxonomy" id="297246"/>
    <lineage>
        <taxon>Bacteria</taxon>
        <taxon>Pseudomonadati</taxon>
        <taxon>Pseudomonadota</taxon>
        <taxon>Gammaproteobacteria</taxon>
        <taxon>Legionellales</taxon>
        <taxon>Legionellaceae</taxon>
        <taxon>Legionella</taxon>
    </lineage>
</organism>
<dbReference type="EC" id="2.6.1.52" evidence="1"/>
<dbReference type="EMBL" id="CR628336">
    <property type="protein sequence ID" value="CAH12524.1"/>
    <property type="molecule type" value="Genomic_DNA"/>
</dbReference>
<dbReference type="RefSeq" id="WP_011213709.1">
    <property type="nucleotide sequence ID" value="NC_006368.1"/>
</dbReference>
<dbReference type="SMR" id="Q5X5E7"/>
<dbReference type="KEGG" id="lpp:lpp1373"/>
<dbReference type="LegioList" id="lpp1373"/>
<dbReference type="HOGENOM" id="CLU_034866_0_2_6"/>
<dbReference type="UniPathway" id="UPA00135">
    <property type="reaction ID" value="UER00197"/>
</dbReference>
<dbReference type="UniPathway" id="UPA00244">
    <property type="reaction ID" value="UER00311"/>
</dbReference>
<dbReference type="GO" id="GO:0005737">
    <property type="term" value="C:cytoplasm"/>
    <property type="evidence" value="ECO:0007669"/>
    <property type="project" value="UniProtKB-SubCell"/>
</dbReference>
<dbReference type="GO" id="GO:0004648">
    <property type="term" value="F:O-phospho-L-serine:2-oxoglutarate aminotransferase activity"/>
    <property type="evidence" value="ECO:0007669"/>
    <property type="project" value="UniProtKB-UniRule"/>
</dbReference>
<dbReference type="GO" id="GO:0030170">
    <property type="term" value="F:pyridoxal phosphate binding"/>
    <property type="evidence" value="ECO:0007669"/>
    <property type="project" value="UniProtKB-UniRule"/>
</dbReference>
<dbReference type="GO" id="GO:0006564">
    <property type="term" value="P:L-serine biosynthetic process"/>
    <property type="evidence" value="ECO:0007669"/>
    <property type="project" value="UniProtKB-UniRule"/>
</dbReference>
<dbReference type="GO" id="GO:0008615">
    <property type="term" value="P:pyridoxine biosynthetic process"/>
    <property type="evidence" value="ECO:0007669"/>
    <property type="project" value="UniProtKB-UniRule"/>
</dbReference>
<dbReference type="FunFam" id="3.40.640.10:FF:000010">
    <property type="entry name" value="Phosphoserine aminotransferase"/>
    <property type="match status" value="1"/>
</dbReference>
<dbReference type="FunFam" id="3.90.1150.10:FF:000006">
    <property type="entry name" value="Phosphoserine aminotransferase"/>
    <property type="match status" value="1"/>
</dbReference>
<dbReference type="Gene3D" id="3.90.1150.10">
    <property type="entry name" value="Aspartate Aminotransferase, domain 1"/>
    <property type="match status" value="1"/>
</dbReference>
<dbReference type="Gene3D" id="3.40.640.10">
    <property type="entry name" value="Type I PLP-dependent aspartate aminotransferase-like (Major domain)"/>
    <property type="match status" value="1"/>
</dbReference>
<dbReference type="HAMAP" id="MF_00160">
    <property type="entry name" value="SerC_aminotrans_5"/>
    <property type="match status" value="1"/>
</dbReference>
<dbReference type="InterPro" id="IPR000192">
    <property type="entry name" value="Aminotrans_V_dom"/>
</dbReference>
<dbReference type="InterPro" id="IPR020578">
    <property type="entry name" value="Aminotrans_V_PyrdxlP_BS"/>
</dbReference>
<dbReference type="InterPro" id="IPR022278">
    <property type="entry name" value="Pser_aminoTfrase"/>
</dbReference>
<dbReference type="InterPro" id="IPR015424">
    <property type="entry name" value="PyrdxlP-dep_Trfase"/>
</dbReference>
<dbReference type="InterPro" id="IPR015421">
    <property type="entry name" value="PyrdxlP-dep_Trfase_major"/>
</dbReference>
<dbReference type="InterPro" id="IPR015422">
    <property type="entry name" value="PyrdxlP-dep_Trfase_small"/>
</dbReference>
<dbReference type="NCBIfam" id="NF003764">
    <property type="entry name" value="PRK05355.1"/>
    <property type="match status" value="1"/>
</dbReference>
<dbReference type="NCBIfam" id="TIGR01364">
    <property type="entry name" value="serC_1"/>
    <property type="match status" value="1"/>
</dbReference>
<dbReference type="PANTHER" id="PTHR43247">
    <property type="entry name" value="PHOSPHOSERINE AMINOTRANSFERASE"/>
    <property type="match status" value="1"/>
</dbReference>
<dbReference type="PANTHER" id="PTHR43247:SF1">
    <property type="entry name" value="PHOSPHOSERINE AMINOTRANSFERASE"/>
    <property type="match status" value="1"/>
</dbReference>
<dbReference type="Pfam" id="PF00266">
    <property type="entry name" value="Aminotran_5"/>
    <property type="match status" value="1"/>
</dbReference>
<dbReference type="PIRSF" id="PIRSF000525">
    <property type="entry name" value="SerC"/>
    <property type="match status" value="1"/>
</dbReference>
<dbReference type="SUPFAM" id="SSF53383">
    <property type="entry name" value="PLP-dependent transferases"/>
    <property type="match status" value="1"/>
</dbReference>
<dbReference type="PROSITE" id="PS00595">
    <property type="entry name" value="AA_TRANSFER_CLASS_5"/>
    <property type="match status" value="1"/>
</dbReference>